<accession>Q5JZR1</accession>
<accession>C6TKA1</accession>
<proteinExistence type="evidence at transcript level"/>
<dbReference type="EMBL" id="AJ875407">
    <property type="protein sequence ID" value="CAI44933.1"/>
    <property type="molecule type" value="mRNA"/>
</dbReference>
<dbReference type="EMBL" id="BT098107">
    <property type="protein sequence ID" value="ACU23341.1"/>
    <property type="molecule type" value="mRNA"/>
</dbReference>
<dbReference type="EMBL" id="CM000853">
    <property type="protein sequence ID" value="KRG90080.1"/>
    <property type="molecule type" value="Genomic_DNA"/>
</dbReference>
<dbReference type="RefSeq" id="NP_001236375.1">
    <property type="nucleotide sequence ID" value="NM_001249446.2"/>
</dbReference>
<dbReference type="FunCoup" id="Q5JZR1">
    <property type="interactions" value="1955"/>
</dbReference>
<dbReference type="STRING" id="3847.Q5JZR1"/>
<dbReference type="PaxDb" id="3847-GLYMA20G16100.1"/>
<dbReference type="EnsemblPlants" id="KRG90080">
    <property type="protein sequence ID" value="KRG90080"/>
    <property type="gene ID" value="GLYMA_20G066100"/>
</dbReference>
<dbReference type="GeneID" id="547685"/>
<dbReference type="Gramene" id="KRG90080">
    <property type="protein sequence ID" value="KRG90080"/>
    <property type="gene ID" value="GLYMA_20G066100"/>
</dbReference>
<dbReference type="KEGG" id="gmx:547685"/>
<dbReference type="eggNOG" id="ENOG502QSUM">
    <property type="taxonomic scope" value="Eukaryota"/>
</dbReference>
<dbReference type="HOGENOM" id="CLU_051751_0_0_1"/>
<dbReference type="InParanoid" id="Q5JZR1"/>
<dbReference type="OrthoDB" id="1908866at2759"/>
<dbReference type="Proteomes" id="UP000008827">
    <property type="component" value="Chromosome 20"/>
</dbReference>
<dbReference type="ExpressionAtlas" id="Q5JZR1">
    <property type="expression patterns" value="baseline and differential"/>
</dbReference>
<dbReference type="GO" id="GO:0005737">
    <property type="term" value="C:cytoplasm"/>
    <property type="evidence" value="ECO:0000314"/>
    <property type="project" value="UniProtKB"/>
</dbReference>
<dbReference type="GO" id="GO:0034976">
    <property type="term" value="P:response to endoplasmic reticulum stress"/>
    <property type="evidence" value="ECO:0000315"/>
    <property type="project" value="UniProtKB"/>
</dbReference>
<dbReference type="GO" id="GO:0009414">
    <property type="term" value="P:response to water deprivation"/>
    <property type="evidence" value="ECO:0000315"/>
    <property type="project" value="UniProtKB"/>
</dbReference>
<dbReference type="InterPro" id="IPR013989">
    <property type="entry name" value="Dev_and_cell_death_domain"/>
</dbReference>
<dbReference type="InterPro" id="IPR044832">
    <property type="entry name" value="NRP-like"/>
</dbReference>
<dbReference type="PANTHER" id="PTHR46034">
    <property type="match status" value="1"/>
</dbReference>
<dbReference type="PANTHER" id="PTHR46034:SF20">
    <property type="entry name" value="DCD DOMAIN-CONTAINING PROTEIN NRP-A"/>
    <property type="match status" value="1"/>
</dbReference>
<dbReference type="Pfam" id="PF10539">
    <property type="entry name" value="Dev_Cell_Death"/>
    <property type="match status" value="1"/>
</dbReference>
<dbReference type="SMART" id="SM00767">
    <property type="entry name" value="DCD"/>
    <property type="match status" value="1"/>
</dbReference>
<dbReference type="PROSITE" id="PS51222">
    <property type="entry name" value="DCD"/>
    <property type="match status" value="1"/>
</dbReference>
<organism>
    <name type="scientific">Glycine max</name>
    <name type="common">Soybean</name>
    <name type="synonym">Glycine hispida</name>
    <dbReference type="NCBI Taxonomy" id="3847"/>
    <lineage>
        <taxon>Eukaryota</taxon>
        <taxon>Viridiplantae</taxon>
        <taxon>Streptophyta</taxon>
        <taxon>Embryophyta</taxon>
        <taxon>Tracheophyta</taxon>
        <taxon>Spermatophyta</taxon>
        <taxon>Magnoliopsida</taxon>
        <taxon>eudicotyledons</taxon>
        <taxon>Gunneridae</taxon>
        <taxon>Pentapetalae</taxon>
        <taxon>rosids</taxon>
        <taxon>fabids</taxon>
        <taxon>Fabales</taxon>
        <taxon>Fabaceae</taxon>
        <taxon>Papilionoideae</taxon>
        <taxon>50 kb inversion clade</taxon>
        <taxon>NPAAA clade</taxon>
        <taxon>indigoferoid/millettioid clade</taxon>
        <taxon>Phaseoleae</taxon>
        <taxon>Glycine</taxon>
        <taxon>Glycine subgen. Soja</taxon>
    </lineage>
</organism>
<feature type="chain" id="PRO_0000451106" description="DCD domain-containing protein NRP-A">
    <location>
        <begin position="1"/>
        <end position="368"/>
    </location>
</feature>
<feature type="domain" description="DCD" evidence="1">
    <location>
        <begin position="223"/>
        <end position="355"/>
    </location>
</feature>
<feature type="region of interest" description="Disordered" evidence="2">
    <location>
        <begin position="35"/>
        <end position="61"/>
    </location>
</feature>
<feature type="region of interest" description="Disordered" evidence="2">
    <location>
        <begin position="171"/>
        <end position="218"/>
    </location>
</feature>
<feature type="compositionally biased region" description="Basic and acidic residues" evidence="2">
    <location>
        <begin position="38"/>
        <end position="50"/>
    </location>
</feature>
<feature type="compositionally biased region" description="Polar residues" evidence="2">
    <location>
        <begin position="52"/>
        <end position="61"/>
    </location>
</feature>
<feature type="compositionally biased region" description="Low complexity" evidence="2">
    <location>
        <begin position="195"/>
        <end position="204"/>
    </location>
</feature>
<feature type="sequence conflict" description="In Ref. 2; ACU23341." evidence="9" ref="2">
    <original>L</original>
    <variation>F</variation>
    <location>
        <position position="329"/>
    </location>
</feature>
<feature type="sequence conflict" description="In Ref. 2; ACU23341." evidence="9" ref="2">
    <original>SL</original>
    <variation>FF</variation>
    <location>
        <begin position="348"/>
        <end position="349"/>
    </location>
</feature>
<feature type="sequence conflict" description="In Ref. 2; ACU23341." evidence="9" ref="2">
    <original>F</original>
    <variation>L</variation>
    <location>
        <position position="359"/>
    </location>
</feature>
<comment type="function">
    <text evidence="4">Involved in stress signaling pathway that mediates cell death in response to endoplasmic reticulum (ER) stress and osmotic stress.</text>
</comment>
<comment type="subcellular location">
    <subcellularLocation>
        <location evidence="4">Cytoplasm</location>
    </subcellularLocation>
</comment>
<comment type="induction">
    <text evidence="3 4 5 6">Induced by infection with an avirulent strain of the bacterial pathogen Pseudomonas syringae pv glycinea (Ref.1). Induced by infection with the fungal pathogen Phytophtora sojae (Ref.1). Induced by copper, cycloheximide and reduced glutathione (Ref.1). Induced by tunicamycin, azetidine-2-carboxylate (AZC) and osmotic stress (PubMed:18036212, PubMed:18490446). Induced by dithiothreitol (DTT) (PubMed:18490446). Induced by wounding (PubMed:21482825).</text>
</comment>
<comment type="miscellaneous">
    <text evidence="4">Overexpression of NRP in protoplasts induces caspase-3-like activity and promotes extensive DNA fragmentation (PubMed:18490446). Transient expression of NRP in planta causes leaf yellowing, chlorophyll loss, malondialdehyde production, ethylene accumulation, and induction of the senescence marker gene CP1 (PubMed:18490446).</text>
</comment>
<keyword id="KW-0963">Cytoplasm</keyword>
<keyword id="KW-1185">Reference proteome</keyword>
<keyword id="KW-0346">Stress response</keyword>
<gene>
    <name evidence="7" type="primary">NRP-A</name>
    <name evidence="8" type="synonym">NRP</name>
    <name evidence="10" type="ORF">GLYMA_20G066100</name>
</gene>
<sequence length="368" mass="41550">MDNNNDFWKFSDQLRLESGLANLSLNDYSIWSNSYSSKRPDQRRNFDVKGSDFNNNNNSSKAFDDDFNDGWKITNSNGPLFSMPHNNNNNTLEVGGFNKGGGIYSNTNTTISSYHPNNLNNNAFGGFNKGIYSNTTSSPYLNNNHHHLDDNNNLNRNNLKGYKTYFKGEDQFHTPKSAKKKNTTNNTNNKKHGDNTNNNDGTKTGAEKKFKTLPPSESLPKNETIGGYIFVCNNDTMAENLQRQLFGLPPRYRDSVRTITPGLPIFLYNYSTHQLHGIFEAASFGGSNIDPTAWEDKKCPGESRFPAQVQVITRKVCEPLEEDSFRPILHHYDGPKFRLELSVPEALSLLDIFANQNSFDDIFKAIPA</sequence>
<name>NRPA_SOYBN</name>
<evidence type="ECO:0000255" key="1">
    <source>
        <dbReference type="PROSITE-ProRule" id="PRU00569"/>
    </source>
</evidence>
<evidence type="ECO:0000256" key="2">
    <source>
        <dbReference type="SAM" id="MobiDB-lite"/>
    </source>
</evidence>
<evidence type="ECO:0000269" key="3">
    <source>
    </source>
</evidence>
<evidence type="ECO:0000269" key="4">
    <source>
    </source>
</evidence>
<evidence type="ECO:0000269" key="5">
    <source>
    </source>
</evidence>
<evidence type="ECO:0000269" key="6">
    <source ref="1"/>
</evidence>
<evidence type="ECO:0000303" key="7">
    <source>
    </source>
</evidence>
<evidence type="ECO:0000303" key="8">
    <source ref="1"/>
</evidence>
<evidence type="ECO:0000305" key="9"/>
<evidence type="ECO:0000312" key="10">
    <source>
        <dbReference type="EMBL" id="KRG90080.1"/>
    </source>
</evidence>
<reference key="1">
    <citation type="journal article" date="2001" name="Eur. J. Plant Pathol.">
        <title>A new cell wall located N-rich protein is strongly induced during the hypersensitive response in Glycine max L.</title>
        <authorList>
            <person name="Ludwig A.A."/>
            <person name="Tenhaken R."/>
        </authorList>
    </citation>
    <scope>NUCLEOTIDE SEQUENCE [MRNA]</scope>
    <scope>INDUCTION</scope>
</reference>
<reference key="2">
    <citation type="submission" date="2009-08" db="EMBL/GenBank/DDBJ databases">
        <authorList>
            <person name="Cheung F."/>
            <person name="Xiao Y."/>
            <person name="Chan A."/>
            <person name="Moskal W."/>
            <person name="Town C.D."/>
        </authorList>
    </citation>
    <scope>NUCLEOTIDE SEQUENCE [MRNA]</scope>
</reference>
<reference key="3">
    <citation type="journal article" date="2010" name="Nature">
        <title>Genome sequence of the palaeopolyploid soybean.</title>
        <authorList>
            <person name="Schmutz J."/>
            <person name="Cannon S.B."/>
            <person name="Schlueter J."/>
            <person name="Ma J."/>
            <person name="Mitros T."/>
            <person name="Nelson W."/>
            <person name="Hyten D.L."/>
            <person name="Song Q."/>
            <person name="Thelen J.J."/>
            <person name="Cheng J."/>
            <person name="Xu D."/>
            <person name="Hellsten U."/>
            <person name="May G.D."/>
            <person name="Yu Y."/>
            <person name="Sakurai T."/>
            <person name="Umezawa T."/>
            <person name="Bhattacharyya M.K."/>
            <person name="Sandhu D."/>
            <person name="Valliyodan B."/>
            <person name="Lindquist E."/>
            <person name="Peto M."/>
            <person name="Grant D."/>
            <person name="Shu S."/>
            <person name="Goodstein D."/>
            <person name="Barry K."/>
            <person name="Futrell-Griggs M."/>
            <person name="Abernathy B."/>
            <person name="Du J."/>
            <person name="Tian Z."/>
            <person name="Zhu L."/>
            <person name="Gill N."/>
            <person name="Joshi T."/>
            <person name="Libault M."/>
            <person name="Sethuraman A."/>
            <person name="Zhang X.-C."/>
            <person name="Shinozaki K."/>
            <person name="Nguyen H.T."/>
            <person name="Wing R.A."/>
            <person name="Cregan P."/>
            <person name="Specht J."/>
            <person name="Grimwood J."/>
            <person name="Rokhsar D."/>
            <person name="Stacey G."/>
            <person name="Shoemaker R.C."/>
            <person name="Jackson S.A."/>
        </authorList>
    </citation>
    <scope>NUCLEOTIDE SEQUENCE [LARGE SCALE GENOMIC DNA]</scope>
    <source>
        <strain>cv. Williams 82</strain>
    </source>
</reference>
<reference key="4">
    <citation type="journal article" date="2007" name="BMC Genomics">
        <title>Expression profiling on soybean leaves reveals integration of ER- and osmotic-stress pathways.</title>
        <authorList>
            <person name="Irsigler A.S."/>
            <person name="Costa M.D."/>
            <person name="Zhang P."/>
            <person name="Reis P.A."/>
            <person name="Dewey R.E."/>
            <person name="Boston R.S."/>
            <person name="Fontes E.P."/>
        </authorList>
    </citation>
    <scope>INDUCTION</scope>
</reference>
<reference key="5">
    <citation type="journal article" date="2008" name="J. Biol. Chem.">
        <title>A new branch of endoplasmic reticulum stress signaling and the osmotic signal converge on plant-specific asparagine-rich proteins to promote cell death.</title>
        <authorList>
            <person name="Costa M.D."/>
            <person name="Reis P.A."/>
            <person name="Valente M.A."/>
            <person name="Irsigler A.S."/>
            <person name="Carvalho C.M."/>
            <person name="Loureiro M.E."/>
            <person name="Aragao F.J."/>
            <person name="Boston R.S."/>
            <person name="Fietto L.G."/>
            <person name="Fontes E.P."/>
        </authorList>
    </citation>
    <scope>FUNCTION</scope>
    <scope>SUBCELLULAR LOCATION</scope>
    <scope>INDUCTION</scope>
</reference>
<reference key="6">
    <citation type="journal article" date="2011" name="J. Biol. Chem.">
        <title>A novel transcription factor, ERD15 (Early Responsive to Dehydration 15), connects endoplasmic reticulum stress with an osmotic stress-induced cell death signal.</title>
        <authorList>
            <person name="Alves M.S."/>
            <person name="Reis P.A."/>
            <person name="Dadalto S.P."/>
            <person name="Faria J.A."/>
            <person name="Fontes E.P."/>
            <person name="Fietto L.G."/>
        </authorList>
    </citation>
    <scope>INDUCTION</scope>
</reference>
<protein>
    <recommendedName>
        <fullName evidence="9">DCD domain-containing protein NRP-A</fullName>
    </recommendedName>
    <alternativeName>
        <fullName evidence="8">Asparagine-rich protein</fullName>
        <shortName evidence="8">N-rich protein</shortName>
    </alternativeName>
    <alternativeName>
        <fullName evidence="7">N-rich protein A</fullName>
    </alternativeName>
</protein>